<comment type="function">
    <text evidence="1">Required for vesicular transport between the endoplasmic reticulum and the Golgi apparatus. Together with GNA12 promotes CDH5 localization to plasma membrane.</text>
</comment>
<comment type="subunit">
    <text evidence="1 2 3">Interacts with PRKCABP, and disrupts the interaction between GRIA2 and PRKCABP, leading to the internalization of GRIA2 (By similarity). Found in a complex with VAMP8 (By similarity). Component of a SNARE-like complex that contains at least ZW10, USE1L, RINT1, STX18 and NAPA/SNAP-alpha (By similarity). Interacts with VTI1A (PubMed:9705316). Interacts with STX12 (By similarity). Interacts with GNA12 (via N-terminus); the interaction promotes CDH5 localization to plasma membrane (By similarity).</text>
</comment>
<comment type="subcellular location">
    <subcellularLocation>
        <location evidence="1">Cell membrane</location>
        <topology evidence="1">Peripheral membrane protein</topology>
    </subcellularLocation>
</comment>
<comment type="similarity">
    <text evidence="4">Belongs to the SNAP family.</text>
</comment>
<accession>Q9DB05</accession>
<accession>Q543I3</accession>
<gene>
    <name type="primary">Napa</name>
    <name type="synonym">Snapa</name>
</gene>
<organism>
    <name type="scientific">Mus musculus</name>
    <name type="common">Mouse</name>
    <dbReference type="NCBI Taxonomy" id="10090"/>
    <lineage>
        <taxon>Eukaryota</taxon>
        <taxon>Metazoa</taxon>
        <taxon>Chordata</taxon>
        <taxon>Craniata</taxon>
        <taxon>Vertebrata</taxon>
        <taxon>Euteleostomi</taxon>
        <taxon>Mammalia</taxon>
        <taxon>Eutheria</taxon>
        <taxon>Euarchontoglires</taxon>
        <taxon>Glires</taxon>
        <taxon>Rodentia</taxon>
        <taxon>Myomorpha</taxon>
        <taxon>Muroidea</taxon>
        <taxon>Muridae</taxon>
        <taxon>Murinae</taxon>
        <taxon>Mus</taxon>
        <taxon>Mus</taxon>
    </lineage>
</organism>
<reference key="1">
    <citation type="journal article" date="2005" name="Science">
        <title>The transcriptional landscape of the mammalian genome.</title>
        <authorList>
            <person name="Carninci P."/>
            <person name="Kasukawa T."/>
            <person name="Katayama S."/>
            <person name="Gough J."/>
            <person name="Frith M.C."/>
            <person name="Maeda N."/>
            <person name="Oyama R."/>
            <person name="Ravasi T."/>
            <person name="Lenhard B."/>
            <person name="Wells C."/>
            <person name="Kodzius R."/>
            <person name="Shimokawa K."/>
            <person name="Bajic V.B."/>
            <person name="Brenner S.E."/>
            <person name="Batalov S."/>
            <person name="Forrest A.R."/>
            <person name="Zavolan M."/>
            <person name="Davis M.J."/>
            <person name="Wilming L.G."/>
            <person name="Aidinis V."/>
            <person name="Allen J.E."/>
            <person name="Ambesi-Impiombato A."/>
            <person name="Apweiler R."/>
            <person name="Aturaliya R.N."/>
            <person name="Bailey T.L."/>
            <person name="Bansal M."/>
            <person name="Baxter L."/>
            <person name="Beisel K.W."/>
            <person name="Bersano T."/>
            <person name="Bono H."/>
            <person name="Chalk A.M."/>
            <person name="Chiu K.P."/>
            <person name="Choudhary V."/>
            <person name="Christoffels A."/>
            <person name="Clutterbuck D.R."/>
            <person name="Crowe M.L."/>
            <person name="Dalla E."/>
            <person name="Dalrymple B.P."/>
            <person name="de Bono B."/>
            <person name="Della Gatta G."/>
            <person name="di Bernardo D."/>
            <person name="Down T."/>
            <person name="Engstrom P."/>
            <person name="Fagiolini M."/>
            <person name="Faulkner G."/>
            <person name="Fletcher C.F."/>
            <person name="Fukushima T."/>
            <person name="Furuno M."/>
            <person name="Futaki S."/>
            <person name="Gariboldi M."/>
            <person name="Georgii-Hemming P."/>
            <person name="Gingeras T.R."/>
            <person name="Gojobori T."/>
            <person name="Green R.E."/>
            <person name="Gustincich S."/>
            <person name="Harbers M."/>
            <person name="Hayashi Y."/>
            <person name="Hensch T.K."/>
            <person name="Hirokawa N."/>
            <person name="Hill D."/>
            <person name="Huminiecki L."/>
            <person name="Iacono M."/>
            <person name="Ikeo K."/>
            <person name="Iwama A."/>
            <person name="Ishikawa T."/>
            <person name="Jakt M."/>
            <person name="Kanapin A."/>
            <person name="Katoh M."/>
            <person name="Kawasawa Y."/>
            <person name="Kelso J."/>
            <person name="Kitamura H."/>
            <person name="Kitano H."/>
            <person name="Kollias G."/>
            <person name="Krishnan S.P."/>
            <person name="Kruger A."/>
            <person name="Kummerfeld S.K."/>
            <person name="Kurochkin I.V."/>
            <person name="Lareau L.F."/>
            <person name="Lazarevic D."/>
            <person name="Lipovich L."/>
            <person name="Liu J."/>
            <person name="Liuni S."/>
            <person name="McWilliam S."/>
            <person name="Madan Babu M."/>
            <person name="Madera M."/>
            <person name="Marchionni L."/>
            <person name="Matsuda H."/>
            <person name="Matsuzawa S."/>
            <person name="Miki H."/>
            <person name="Mignone F."/>
            <person name="Miyake S."/>
            <person name="Morris K."/>
            <person name="Mottagui-Tabar S."/>
            <person name="Mulder N."/>
            <person name="Nakano N."/>
            <person name="Nakauchi H."/>
            <person name="Ng P."/>
            <person name="Nilsson R."/>
            <person name="Nishiguchi S."/>
            <person name="Nishikawa S."/>
            <person name="Nori F."/>
            <person name="Ohara O."/>
            <person name="Okazaki Y."/>
            <person name="Orlando V."/>
            <person name="Pang K.C."/>
            <person name="Pavan W.J."/>
            <person name="Pavesi G."/>
            <person name="Pesole G."/>
            <person name="Petrovsky N."/>
            <person name="Piazza S."/>
            <person name="Reed J."/>
            <person name="Reid J.F."/>
            <person name="Ring B.Z."/>
            <person name="Ringwald M."/>
            <person name="Rost B."/>
            <person name="Ruan Y."/>
            <person name="Salzberg S.L."/>
            <person name="Sandelin A."/>
            <person name="Schneider C."/>
            <person name="Schoenbach C."/>
            <person name="Sekiguchi K."/>
            <person name="Semple C.A."/>
            <person name="Seno S."/>
            <person name="Sessa L."/>
            <person name="Sheng Y."/>
            <person name="Shibata Y."/>
            <person name="Shimada H."/>
            <person name="Shimada K."/>
            <person name="Silva D."/>
            <person name="Sinclair B."/>
            <person name="Sperling S."/>
            <person name="Stupka E."/>
            <person name="Sugiura K."/>
            <person name="Sultana R."/>
            <person name="Takenaka Y."/>
            <person name="Taki K."/>
            <person name="Tammoja K."/>
            <person name="Tan S.L."/>
            <person name="Tang S."/>
            <person name="Taylor M.S."/>
            <person name="Tegner J."/>
            <person name="Teichmann S.A."/>
            <person name="Ueda H.R."/>
            <person name="van Nimwegen E."/>
            <person name="Verardo R."/>
            <person name="Wei C.L."/>
            <person name="Yagi K."/>
            <person name="Yamanishi H."/>
            <person name="Zabarovsky E."/>
            <person name="Zhu S."/>
            <person name="Zimmer A."/>
            <person name="Hide W."/>
            <person name="Bult C."/>
            <person name="Grimmond S.M."/>
            <person name="Teasdale R.D."/>
            <person name="Liu E.T."/>
            <person name="Brusic V."/>
            <person name="Quackenbush J."/>
            <person name="Wahlestedt C."/>
            <person name="Mattick J.S."/>
            <person name="Hume D.A."/>
            <person name="Kai C."/>
            <person name="Sasaki D."/>
            <person name="Tomaru Y."/>
            <person name="Fukuda S."/>
            <person name="Kanamori-Katayama M."/>
            <person name="Suzuki M."/>
            <person name="Aoki J."/>
            <person name="Arakawa T."/>
            <person name="Iida J."/>
            <person name="Imamura K."/>
            <person name="Itoh M."/>
            <person name="Kato T."/>
            <person name="Kawaji H."/>
            <person name="Kawagashira N."/>
            <person name="Kawashima T."/>
            <person name="Kojima M."/>
            <person name="Kondo S."/>
            <person name="Konno H."/>
            <person name="Nakano K."/>
            <person name="Ninomiya N."/>
            <person name="Nishio T."/>
            <person name="Okada M."/>
            <person name="Plessy C."/>
            <person name="Shibata K."/>
            <person name="Shiraki T."/>
            <person name="Suzuki S."/>
            <person name="Tagami M."/>
            <person name="Waki K."/>
            <person name="Watahiki A."/>
            <person name="Okamura-Oho Y."/>
            <person name="Suzuki H."/>
            <person name="Kawai J."/>
            <person name="Hayashizaki Y."/>
        </authorList>
    </citation>
    <scope>NUCLEOTIDE SEQUENCE [LARGE SCALE MRNA]</scope>
    <source>
        <strain>C57BL/6J</strain>
        <strain>NOD</strain>
        <tissue>Cerebellum</tissue>
        <tissue>Epididymis</tissue>
        <tissue>Spleen</tissue>
        <tissue>Thymus</tissue>
    </source>
</reference>
<reference key="2">
    <citation type="journal article" date="2004" name="Genome Res.">
        <title>The status, quality, and expansion of the NIH full-length cDNA project: the Mammalian Gene Collection (MGC).</title>
        <authorList>
            <consortium name="The MGC Project Team"/>
        </authorList>
    </citation>
    <scope>NUCLEOTIDE SEQUENCE [LARGE SCALE MRNA]</scope>
</reference>
<reference key="3">
    <citation type="submission" date="2007-04" db="UniProtKB">
        <authorList>
            <person name="Lubec G."/>
            <person name="Kang S.U."/>
        </authorList>
    </citation>
    <scope>PROTEIN SEQUENCE OF 247-264 AND 272-282</scope>
    <scope>IDENTIFICATION BY MASS SPECTROMETRY</scope>
    <source>
        <strain>C57BL/6J</strain>
        <tissue>Brain</tissue>
    </source>
</reference>
<reference key="4">
    <citation type="journal article" date="1998" name="J. Biol. Chem.">
        <title>A 29-kilodalton Golgi soluble N-ethylmaleimide-sensitive factor attachment protein receptor (Vti1-rp2) implicated in protein trafficking in the secretory pathway.</title>
        <authorList>
            <person name="Xu Y."/>
            <person name="Wong S.H."/>
            <person name="Tang B.L."/>
            <person name="Subramaniam V.N."/>
            <person name="Zhang T."/>
            <person name="Hong W."/>
        </authorList>
    </citation>
    <scope>INTERACTION WITH VTI1A</scope>
</reference>
<reference key="5">
    <citation type="journal article" date="2010" name="Cell">
        <title>A tissue-specific atlas of mouse protein phosphorylation and expression.</title>
        <authorList>
            <person name="Huttlin E.L."/>
            <person name="Jedrychowski M.P."/>
            <person name="Elias J.E."/>
            <person name="Goswami T."/>
            <person name="Rad R."/>
            <person name="Beausoleil S.A."/>
            <person name="Villen J."/>
            <person name="Haas W."/>
            <person name="Sowa M.E."/>
            <person name="Gygi S.P."/>
        </authorList>
    </citation>
    <scope>PHOSPHORYLATION [LARGE SCALE ANALYSIS] AT SER-26 AND SER-195</scope>
    <scope>IDENTIFICATION BY MASS SPECTROMETRY [LARGE SCALE ANALYSIS]</scope>
    <source>
        <tissue>Brain</tissue>
        <tissue>Brown adipose tissue</tissue>
        <tissue>Heart</tissue>
        <tissue>Kidney</tissue>
        <tissue>Liver</tissue>
        <tissue>Lung</tissue>
        <tissue>Pancreas</tissue>
        <tissue>Spleen</tissue>
        <tissue>Testis</tissue>
    </source>
</reference>
<name>SNAA_MOUSE</name>
<evidence type="ECO:0000250" key="1">
    <source>
        <dbReference type="UniProtKB" id="P54920"/>
    </source>
</evidence>
<evidence type="ECO:0000250" key="2">
    <source>
        <dbReference type="UniProtKB" id="P54921"/>
    </source>
</evidence>
<evidence type="ECO:0000269" key="3">
    <source>
    </source>
</evidence>
<evidence type="ECO:0000305" key="4"/>
<evidence type="ECO:0007744" key="5">
    <source>
    </source>
</evidence>
<sequence length="295" mass="33190">MDNSGKQAEAMALLAEAERKVKNSQSFFSGLFGGSSKIEEACEIYARAANMFKMAKNWSAAGNAFCQAAQLHLQLQSKHDAATCFVDAGNAFKKADPQEAINCLMRAIEIYTDMGRFTIAAKHHISIAEIYETELVDVEKAIAHYEQSADYYKGEESNSSANKCLLKVAGYAAQLEQYQKAIDIYEQVGTSAMDSPLLKYSAKDYFFKAALCHFCIDMLNAKLAVQKYEELFPAFSDSRECKLMKKLLEAHEEQNVDSYTEAVKEYDSISRLDQWLTTMLLRIKKTIQGDEEDLR</sequence>
<keyword id="KW-0007">Acetylation</keyword>
<keyword id="KW-1003">Cell membrane</keyword>
<keyword id="KW-0903">Direct protein sequencing</keyword>
<keyword id="KW-0931">ER-Golgi transport</keyword>
<keyword id="KW-0472">Membrane</keyword>
<keyword id="KW-0597">Phosphoprotein</keyword>
<keyword id="KW-0653">Protein transport</keyword>
<keyword id="KW-1185">Reference proteome</keyword>
<keyword id="KW-0813">Transport</keyword>
<feature type="chain" id="PRO_0000219057" description="Alpha-soluble NSF attachment protein">
    <location>
        <begin position="1"/>
        <end position="295"/>
    </location>
</feature>
<feature type="modified residue" description="N-acetylmethionine" evidence="1">
    <location>
        <position position="1"/>
    </location>
</feature>
<feature type="modified residue" description="Phosphoserine" evidence="5">
    <location>
        <position position="26"/>
    </location>
</feature>
<feature type="modified residue" description="Phosphoserine" evidence="1">
    <location>
        <position position="29"/>
    </location>
</feature>
<feature type="modified residue" description="Phosphoserine" evidence="5">
    <location>
        <position position="195"/>
    </location>
</feature>
<dbReference type="EMBL" id="AK005372">
    <property type="protein sequence ID" value="BAB23981.1"/>
    <property type="molecule type" value="mRNA"/>
</dbReference>
<dbReference type="EMBL" id="AK050623">
    <property type="protein sequence ID" value="BAC34348.1"/>
    <property type="molecule type" value="mRNA"/>
</dbReference>
<dbReference type="EMBL" id="AK136689">
    <property type="protein sequence ID" value="BAE23100.1"/>
    <property type="molecule type" value="mRNA"/>
</dbReference>
<dbReference type="EMBL" id="AK171998">
    <property type="protein sequence ID" value="BAE42767.1"/>
    <property type="molecule type" value="mRNA"/>
</dbReference>
<dbReference type="EMBL" id="BC004804">
    <property type="protein sequence ID" value="AAH04804.1"/>
    <property type="molecule type" value="mRNA"/>
</dbReference>
<dbReference type="CCDS" id="CCDS20843.1"/>
<dbReference type="RefSeq" id="NP_080174.1">
    <property type="nucleotide sequence ID" value="NM_025898.4"/>
</dbReference>
<dbReference type="RefSeq" id="XP_030097834.1">
    <property type="nucleotide sequence ID" value="XM_030241974.1"/>
</dbReference>
<dbReference type="RefSeq" id="XP_030097835.1">
    <property type="nucleotide sequence ID" value="XM_030241975.1"/>
</dbReference>
<dbReference type="SMR" id="Q9DB05"/>
<dbReference type="BioGRID" id="223847">
    <property type="interactions" value="19"/>
</dbReference>
<dbReference type="FunCoup" id="Q9DB05">
    <property type="interactions" value="2293"/>
</dbReference>
<dbReference type="IntAct" id="Q9DB05">
    <property type="interactions" value="2"/>
</dbReference>
<dbReference type="STRING" id="10090.ENSMUSP00000006181"/>
<dbReference type="GlyGen" id="Q9DB05">
    <property type="glycosylation" value="1 site, 1 O-linked glycan (1 site)"/>
</dbReference>
<dbReference type="iPTMnet" id="Q9DB05"/>
<dbReference type="PhosphoSitePlus" id="Q9DB05"/>
<dbReference type="SwissPalm" id="Q9DB05"/>
<dbReference type="REPRODUCTION-2DPAGE" id="Q9DB05"/>
<dbReference type="jPOST" id="Q9DB05"/>
<dbReference type="PaxDb" id="10090-ENSMUSP00000006181"/>
<dbReference type="PeptideAtlas" id="Q9DB05"/>
<dbReference type="ProteomicsDB" id="257532"/>
<dbReference type="Pumba" id="Q9DB05"/>
<dbReference type="Antibodypedia" id="4110">
    <property type="antibodies" value="266 antibodies from 33 providers"/>
</dbReference>
<dbReference type="DNASU" id="108124"/>
<dbReference type="Ensembl" id="ENSMUST00000006181.7">
    <property type="protein sequence ID" value="ENSMUSP00000006181.7"/>
    <property type="gene ID" value="ENSMUSG00000006024.14"/>
</dbReference>
<dbReference type="GeneID" id="108124"/>
<dbReference type="KEGG" id="mmu:108124"/>
<dbReference type="UCSC" id="uc009fgw.1">
    <property type="organism name" value="mouse"/>
</dbReference>
<dbReference type="AGR" id="MGI:104563"/>
<dbReference type="CTD" id="8775"/>
<dbReference type="MGI" id="MGI:104563">
    <property type="gene designation" value="Napa"/>
</dbReference>
<dbReference type="VEuPathDB" id="HostDB:ENSMUSG00000006024"/>
<dbReference type="eggNOG" id="KOG1586">
    <property type="taxonomic scope" value="Eukaryota"/>
</dbReference>
<dbReference type="GeneTree" id="ENSGT00390000005826"/>
<dbReference type="HOGENOM" id="CLU_046329_0_2_1"/>
<dbReference type="InParanoid" id="Q9DB05"/>
<dbReference type="OMA" id="WSVKEYL"/>
<dbReference type="OrthoDB" id="9984275at2759"/>
<dbReference type="PhylomeDB" id="Q9DB05"/>
<dbReference type="TreeFam" id="TF316547"/>
<dbReference type="Reactome" id="R-MMU-204005">
    <property type="pathway name" value="COPII-mediated vesicle transport"/>
</dbReference>
<dbReference type="Reactome" id="R-MMU-432722">
    <property type="pathway name" value="Golgi Associated Vesicle Biogenesis"/>
</dbReference>
<dbReference type="Reactome" id="R-MMU-6807878">
    <property type="pathway name" value="COPI-mediated anterograde transport"/>
</dbReference>
<dbReference type="Reactome" id="R-MMU-6811434">
    <property type="pathway name" value="COPI-dependent Golgi-to-ER retrograde traffic"/>
</dbReference>
<dbReference type="Reactome" id="R-MMU-6811438">
    <property type="pathway name" value="Intra-Golgi traffic"/>
</dbReference>
<dbReference type="Reactome" id="R-MMU-6811440">
    <property type="pathway name" value="Retrograde transport at the Trans-Golgi-Network"/>
</dbReference>
<dbReference type="BioGRID-ORCS" id="108124">
    <property type="hits" value="24 hits in 76 CRISPR screens"/>
</dbReference>
<dbReference type="CD-CODE" id="CE726F99">
    <property type="entry name" value="Postsynaptic density"/>
</dbReference>
<dbReference type="ChiTaRS" id="Napa">
    <property type="organism name" value="mouse"/>
</dbReference>
<dbReference type="PRO" id="PR:Q9DB05"/>
<dbReference type="Proteomes" id="UP000000589">
    <property type="component" value="Chromosome 7"/>
</dbReference>
<dbReference type="RNAct" id="Q9DB05">
    <property type="molecule type" value="protein"/>
</dbReference>
<dbReference type="Bgee" id="ENSMUSG00000006024">
    <property type="expression patterns" value="Expressed in dentate gyrus of hippocampal formation granule cell and 280 other cell types or tissues"/>
</dbReference>
<dbReference type="ExpressionAtlas" id="Q9DB05">
    <property type="expression patterns" value="baseline and differential"/>
</dbReference>
<dbReference type="GO" id="GO:0098978">
    <property type="term" value="C:glutamatergic synapse"/>
    <property type="evidence" value="ECO:0000314"/>
    <property type="project" value="SynGO"/>
</dbReference>
<dbReference type="GO" id="GO:0043209">
    <property type="term" value="C:myelin sheath"/>
    <property type="evidence" value="ECO:0007005"/>
    <property type="project" value="UniProtKB"/>
</dbReference>
<dbReference type="GO" id="GO:0031594">
    <property type="term" value="C:neuromuscular junction"/>
    <property type="evidence" value="ECO:0007669"/>
    <property type="project" value="Ensembl"/>
</dbReference>
<dbReference type="GO" id="GO:0098794">
    <property type="term" value="C:postsynapse"/>
    <property type="evidence" value="ECO:0007669"/>
    <property type="project" value="Ensembl"/>
</dbReference>
<dbReference type="GO" id="GO:0048787">
    <property type="term" value="C:presynaptic active zone membrane"/>
    <property type="evidence" value="ECO:0007669"/>
    <property type="project" value="Ensembl"/>
</dbReference>
<dbReference type="GO" id="GO:0070044">
    <property type="term" value="C:synaptobrevin 2-SNAP-25-syntaxin-1a complex"/>
    <property type="evidence" value="ECO:0000314"/>
    <property type="project" value="MGI"/>
</dbReference>
<dbReference type="GO" id="GO:0044877">
    <property type="term" value="F:protein-containing complex binding"/>
    <property type="evidence" value="ECO:0000250"/>
    <property type="project" value="ParkinsonsUK-UCL"/>
</dbReference>
<dbReference type="GO" id="GO:0000149">
    <property type="term" value="F:SNARE binding"/>
    <property type="evidence" value="ECO:0000250"/>
    <property type="project" value="ParkinsonsUK-UCL"/>
</dbReference>
<dbReference type="GO" id="GO:0019905">
    <property type="term" value="F:syntaxin binding"/>
    <property type="evidence" value="ECO:0000314"/>
    <property type="project" value="MGI"/>
</dbReference>
<dbReference type="GO" id="GO:0045176">
    <property type="term" value="P:apical protein localization"/>
    <property type="evidence" value="ECO:0000315"/>
    <property type="project" value="MGI"/>
</dbReference>
<dbReference type="GO" id="GO:0007420">
    <property type="term" value="P:brain development"/>
    <property type="evidence" value="ECO:0000315"/>
    <property type="project" value="MGI"/>
</dbReference>
<dbReference type="GO" id="GO:0006886">
    <property type="term" value="P:intracellular protein transport"/>
    <property type="evidence" value="ECO:0000315"/>
    <property type="project" value="MGI"/>
</dbReference>
<dbReference type="GO" id="GO:0030182">
    <property type="term" value="P:neuron differentiation"/>
    <property type="evidence" value="ECO:0000315"/>
    <property type="project" value="MGI"/>
</dbReference>
<dbReference type="GO" id="GO:0010807">
    <property type="term" value="P:regulation of synaptic vesicle priming"/>
    <property type="evidence" value="ECO:0000314"/>
    <property type="project" value="SynGO"/>
</dbReference>
<dbReference type="GO" id="GO:0035494">
    <property type="term" value="P:SNARE complex disassembly"/>
    <property type="evidence" value="ECO:0000316"/>
    <property type="project" value="MGI"/>
</dbReference>
<dbReference type="GO" id="GO:0035249">
    <property type="term" value="P:synaptic transmission, glutamatergic"/>
    <property type="evidence" value="ECO:0000316"/>
    <property type="project" value="MGI"/>
</dbReference>
<dbReference type="GO" id="GO:0016082">
    <property type="term" value="P:synaptic vesicle priming"/>
    <property type="evidence" value="ECO:0000314"/>
    <property type="project" value="SynGO"/>
</dbReference>
<dbReference type="CDD" id="cd15832">
    <property type="entry name" value="SNAP"/>
    <property type="match status" value="1"/>
</dbReference>
<dbReference type="FunFam" id="1.25.40.10:FF:000028">
    <property type="entry name" value="beta-soluble NSF attachment protein-like isoform X1"/>
    <property type="match status" value="1"/>
</dbReference>
<dbReference type="Gene3D" id="1.25.40.10">
    <property type="entry name" value="Tetratricopeptide repeat domain"/>
    <property type="match status" value="1"/>
</dbReference>
<dbReference type="InterPro" id="IPR000744">
    <property type="entry name" value="NSF_attach"/>
</dbReference>
<dbReference type="InterPro" id="IPR011990">
    <property type="entry name" value="TPR-like_helical_dom_sf"/>
</dbReference>
<dbReference type="PANTHER" id="PTHR13768:SF23">
    <property type="entry name" value="ALPHA-SOLUBLE NSF ATTACHMENT PROTEIN"/>
    <property type="match status" value="1"/>
</dbReference>
<dbReference type="PANTHER" id="PTHR13768">
    <property type="entry name" value="SOLUBLE NSF ATTACHMENT PROTEIN SNAP"/>
    <property type="match status" value="1"/>
</dbReference>
<dbReference type="Pfam" id="PF14938">
    <property type="entry name" value="SNAP"/>
    <property type="match status" value="1"/>
</dbReference>
<dbReference type="PRINTS" id="PR00448">
    <property type="entry name" value="NSFATTACHMNT"/>
</dbReference>
<dbReference type="SUPFAM" id="SSF48452">
    <property type="entry name" value="TPR-like"/>
    <property type="match status" value="1"/>
</dbReference>
<proteinExistence type="evidence at protein level"/>
<protein>
    <recommendedName>
        <fullName>Alpha-soluble NSF attachment protein</fullName>
        <shortName>SNAP-alpha</shortName>
    </recommendedName>
    <alternativeName>
        <fullName>N-ethylmaleimide-sensitive factor attachment protein alpha</fullName>
    </alternativeName>
</protein>